<protein>
    <recommendedName>
        <fullName>Protein midgut expression 1</fullName>
    </recommendedName>
</protein>
<gene>
    <name type="primary">mex1</name>
    <name type="ORF">CG7936</name>
</gene>
<dbReference type="EMBL" id="X58286">
    <property type="protein sequence ID" value="CAA41224.2"/>
    <property type="molecule type" value="Genomic_DNA"/>
</dbReference>
<dbReference type="EMBL" id="M63626">
    <property type="protein sequence ID" value="AAA28685.1"/>
    <property type="molecule type" value="Genomic_DNA"/>
</dbReference>
<dbReference type="EMBL" id="AE014296">
    <property type="protein sequence ID" value="AAF49628.1"/>
    <property type="molecule type" value="Genomic_DNA"/>
</dbReference>
<dbReference type="EMBL" id="AY071615">
    <property type="protein sequence ID" value="AAL49237.1"/>
    <property type="molecule type" value="mRNA"/>
</dbReference>
<dbReference type="PIR" id="A49763">
    <property type="entry name" value="A49763"/>
</dbReference>
<dbReference type="RefSeq" id="NP_001261880.1">
    <property type="nucleotide sequence ID" value="NM_001274951.1"/>
</dbReference>
<dbReference type="RefSeq" id="NP_524086.1">
    <property type="nucleotide sequence ID" value="NM_079362.4"/>
</dbReference>
<dbReference type="SMR" id="P23487"/>
<dbReference type="BioGRID" id="64997">
    <property type="interactions" value="9"/>
</dbReference>
<dbReference type="DIP" id="DIP-19325N"/>
<dbReference type="FunCoup" id="P23487">
    <property type="interactions" value="10"/>
</dbReference>
<dbReference type="IntAct" id="P23487">
    <property type="interactions" value="7"/>
</dbReference>
<dbReference type="STRING" id="7227.FBpp0306209"/>
<dbReference type="PaxDb" id="7227-FBpp0292798"/>
<dbReference type="DNASU" id="39677"/>
<dbReference type="EnsemblMetazoa" id="FBtr0075602">
    <property type="protein sequence ID" value="FBpp0075355"/>
    <property type="gene ID" value="FBgn0004228"/>
</dbReference>
<dbReference type="EnsemblMetazoa" id="FBtr0334084">
    <property type="protein sequence ID" value="FBpp0306209"/>
    <property type="gene ID" value="FBgn0004228"/>
</dbReference>
<dbReference type="GeneID" id="39677"/>
<dbReference type="KEGG" id="dme:Dmel_CG7936"/>
<dbReference type="AGR" id="FB:FBgn0004228"/>
<dbReference type="CTD" id="39677"/>
<dbReference type="FlyBase" id="FBgn0004228">
    <property type="gene designation" value="mex1"/>
</dbReference>
<dbReference type="VEuPathDB" id="VectorBase:FBgn0004228"/>
<dbReference type="eggNOG" id="ENOG502TCVT">
    <property type="taxonomic scope" value="Eukaryota"/>
</dbReference>
<dbReference type="HOGENOM" id="CLU_194019_0_0_1"/>
<dbReference type="InParanoid" id="P23487"/>
<dbReference type="OMA" id="CCCCECA"/>
<dbReference type="OrthoDB" id="8046445at2759"/>
<dbReference type="PhylomeDB" id="P23487"/>
<dbReference type="BioGRID-ORCS" id="39677">
    <property type="hits" value="0 hits in 1 CRISPR screen"/>
</dbReference>
<dbReference type="GenomeRNAi" id="39677"/>
<dbReference type="PRO" id="PR:P23487"/>
<dbReference type="Proteomes" id="UP000000803">
    <property type="component" value="Chromosome 3L"/>
</dbReference>
<dbReference type="Bgee" id="FBgn0004228">
    <property type="expression patterns" value="Expressed in adult posterior midgut class I enteroendocrine cell in adult midgut (Drosophila) and 55 other cell types or tissues"/>
</dbReference>
<dbReference type="ExpressionAtlas" id="P23487">
    <property type="expression patterns" value="baseline and differential"/>
</dbReference>
<name>MEX1_DROME</name>
<comment type="function">
    <text evidence="1">Involved in morphogenesis and development.</text>
</comment>
<comment type="tissue specificity">
    <text evidence="1">Endoderm-specific pattern of expression during embryogenesis; anterior and posterior midgut primordia.</text>
</comment>
<comment type="developmental stage">
    <text evidence="1">Expressed during embryogenesis starting at 9 hours of development.</text>
</comment>
<sequence length="83" mass="9424">MCNALCECLKCPGKVVCCCCSCACKMLLSIVFSALLMVVVIGLIVYFTVFYHKDKNTDEVQKQVAQLTPIVKRSIRDYFNKEY</sequence>
<feature type="chain" id="PRO_0000096456" description="Protein midgut expression 1">
    <location>
        <begin position="1"/>
        <end position="83"/>
    </location>
</feature>
<accession>P23487</accession>
<accession>Q9VUP7</accession>
<keyword id="KW-0217">Developmental protein</keyword>
<keyword id="KW-1185">Reference proteome</keyword>
<evidence type="ECO:0000269" key="1">
    <source>
    </source>
</evidence>
<proteinExistence type="evidence at transcript level"/>
<organism>
    <name type="scientific">Drosophila melanogaster</name>
    <name type="common">Fruit fly</name>
    <dbReference type="NCBI Taxonomy" id="7227"/>
    <lineage>
        <taxon>Eukaryota</taxon>
        <taxon>Metazoa</taxon>
        <taxon>Ecdysozoa</taxon>
        <taxon>Arthropoda</taxon>
        <taxon>Hexapoda</taxon>
        <taxon>Insecta</taxon>
        <taxon>Pterygota</taxon>
        <taxon>Neoptera</taxon>
        <taxon>Endopterygota</taxon>
        <taxon>Diptera</taxon>
        <taxon>Brachycera</taxon>
        <taxon>Muscomorpha</taxon>
        <taxon>Ephydroidea</taxon>
        <taxon>Drosophilidae</taxon>
        <taxon>Drosophila</taxon>
        <taxon>Sophophora</taxon>
    </lineage>
</organism>
<reference key="1">
    <citation type="journal article" date="1991" name="Dev. Biol.">
        <title>Endoderm-specific expression of the Drosophila mex1 gene.</title>
        <authorList>
            <person name="Schulz R.A."/>
            <person name="Xie X."/>
            <person name="Andres A.J."/>
            <person name="Galewsky S."/>
        </authorList>
    </citation>
    <scope>NUCLEOTIDE SEQUENCE [GENOMIC DNA]</scope>
    <scope>FUNCTION</scope>
    <scope>TISSUE SPECIFICITY</scope>
    <scope>DEVELOPMENTAL STAGE</scope>
    <source>
        <strain>Oregon-R</strain>
    </source>
</reference>
<reference key="2">
    <citation type="journal article" date="2000" name="Science">
        <title>The genome sequence of Drosophila melanogaster.</title>
        <authorList>
            <person name="Adams M.D."/>
            <person name="Celniker S.E."/>
            <person name="Holt R.A."/>
            <person name="Evans C.A."/>
            <person name="Gocayne J.D."/>
            <person name="Amanatides P.G."/>
            <person name="Scherer S.E."/>
            <person name="Li P.W."/>
            <person name="Hoskins R.A."/>
            <person name="Galle R.F."/>
            <person name="George R.A."/>
            <person name="Lewis S.E."/>
            <person name="Richards S."/>
            <person name="Ashburner M."/>
            <person name="Henderson S.N."/>
            <person name="Sutton G.G."/>
            <person name="Wortman J.R."/>
            <person name="Yandell M.D."/>
            <person name="Zhang Q."/>
            <person name="Chen L.X."/>
            <person name="Brandon R.C."/>
            <person name="Rogers Y.-H.C."/>
            <person name="Blazej R.G."/>
            <person name="Champe M."/>
            <person name="Pfeiffer B.D."/>
            <person name="Wan K.H."/>
            <person name="Doyle C."/>
            <person name="Baxter E.G."/>
            <person name="Helt G."/>
            <person name="Nelson C.R."/>
            <person name="Miklos G.L.G."/>
            <person name="Abril J.F."/>
            <person name="Agbayani A."/>
            <person name="An H.-J."/>
            <person name="Andrews-Pfannkoch C."/>
            <person name="Baldwin D."/>
            <person name="Ballew R.M."/>
            <person name="Basu A."/>
            <person name="Baxendale J."/>
            <person name="Bayraktaroglu L."/>
            <person name="Beasley E.M."/>
            <person name="Beeson K.Y."/>
            <person name="Benos P.V."/>
            <person name="Berman B.P."/>
            <person name="Bhandari D."/>
            <person name="Bolshakov S."/>
            <person name="Borkova D."/>
            <person name="Botchan M.R."/>
            <person name="Bouck J."/>
            <person name="Brokstein P."/>
            <person name="Brottier P."/>
            <person name="Burtis K.C."/>
            <person name="Busam D.A."/>
            <person name="Butler H."/>
            <person name="Cadieu E."/>
            <person name="Center A."/>
            <person name="Chandra I."/>
            <person name="Cherry J.M."/>
            <person name="Cawley S."/>
            <person name="Dahlke C."/>
            <person name="Davenport L.B."/>
            <person name="Davies P."/>
            <person name="de Pablos B."/>
            <person name="Delcher A."/>
            <person name="Deng Z."/>
            <person name="Mays A.D."/>
            <person name="Dew I."/>
            <person name="Dietz S.M."/>
            <person name="Dodson K."/>
            <person name="Doup L.E."/>
            <person name="Downes M."/>
            <person name="Dugan-Rocha S."/>
            <person name="Dunkov B.C."/>
            <person name="Dunn P."/>
            <person name="Durbin K.J."/>
            <person name="Evangelista C.C."/>
            <person name="Ferraz C."/>
            <person name="Ferriera S."/>
            <person name="Fleischmann W."/>
            <person name="Fosler C."/>
            <person name="Gabrielian A.E."/>
            <person name="Garg N.S."/>
            <person name="Gelbart W.M."/>
            <person name="Glasser K."/>
            <person name="Glodek A."/>
            <person name="Gong F."/>
            <person name="Gorrell J.H."/>
            <person name="Gu Z."/>
            <person name="Guan P."/>
            <person name="Harris M."/>
            <person name="Harris N.L."/>
            <person name="Harvey D.A."/>
            <person name="Heiman T.J."/>
            <person name="Hernandez J.R."/>
            <person name="Houck J."/>
            <person name="Hostin D."/>
            <person name="Houston K.A."/>
            <person name="Howland T.J."/>
            <person name="Wei M.-H."/>
            <person name="Ibegwam C."/>
            <person name="Jalali M."/>
            <person name="Kalush F."/>
            <person name="Karpen G.H."/>
            <person name="Ke Z."/>
            <person name="Kennison J.A."/>
            <person name="Ketchum K.A."/>
            <person name="Kimmel B.E."/>
            <person name="Kodira C.D."/>
            <person name="Kraft C.L."/>
            <person name="Kravitz S."/>
            <person name="Kulp D."/>
            <person name="Lai Z."/>
            <person name="Lasko P."/>
            <person name="Lei Y."/>
            <person name="Levitsky A.A."/>
            <person name="Li J.H."/>
            <person name="Li Z."/>
            <person name="Liang Y."/>
            <person name="Lin X."/>
            <person name="Liu X."/>
            <person name="Mattei B."/>
            <person name="McIntosh T.C."/>
            <person name="McLeod M.P."/>
            <person name="McPherson D."/>
            <person name="Merkulov G."/>
            <person name="Milshina N.V."/>
            <person name="Mobarry C."/>
            <person name="Morris J."/>
            <person name="Moshrefi A."/>
            <person name="Mount S.M."/>
            <person name="Moy M."/>
            <person name="Murphy B."/>
            <person name="Murphy L."/>
            <person name="Muzny D.M."/>
            <person name="Nelson D.L."/>
            <person name="Nelson D.R."/>
            <person name="Nelson K.A."/>
            <person name="Nixon K."/>
            <person name="Nusskern D.R."/>
            <person name="Pacleb J.M."/>
            <person name="Palazzolo M."/>
            <person name="Pittman G.S."/>
            <person name="Pan S."/>
            <person name="Pollard J."/>
            <person name="Puri V."/>
            <person name="Reese M.G."/>
            <person name="Reinert K."/>
            <person name="Remington K."/>
            <person name="Saunders R.D.C."/>
            <person name="Scheeler F."/>
            <person name="Shen H."/>
            <person name="Shue B.C."/>
            <person name="Siden-Kiamos I."/>
            <person name="Simpson M."/>
            <person name="Skupski M.P."/>
            <person name="Smith T.J."/>
            <person name="Spier E."/>
            <person name="Spradling A.C."/>
            <person name="Stapleton M."/>
            <person name="Strong R."/>
            <person name="Sun E."/>
            <person name="Svirskas R."/>
            <person name="Tector C."/>
            <person name="Turner R."/>
            <person name="Venter E."/>
            <person name="Wang A.H."/>
            <person name="Wang X."/>
            <person name="Wang Z.-Y."/>
            <person name="Wassarman D.A."/>
            <person name="Weinstock G.M."/>
            <person name="Weissenbach J."/>
            <person name="Williams S.M."/>
            <person name="Woodage T."/>
            <person name="Worley K.C."/>
            <person name="Wu D."/>
            <person name="Yang S."/>
            <person name="Yao Q.A."/>
            <person name="Ye J."/>
            <person name="Yeh R.-F."/>
            <person name="Zaveri J.S."/>
            <person name="Zhan M."/>
            <person name="Zhang G."/>
            <person name="Zhao Q."/>
            <person name="Zheng L."/>
            <person name="Zheng X.H."/>
            <person name="Zhong F.N."/>
            <person name="Zhong W."/>
            <person name="Zhou X."/>
            <person name="Zhu S.C."/>
            <person name="Zhu X."/>
            <person name="Smith H.O."/>
            <person name="Gibbs R.A."/>
            <person name="Myers E.W."/>
            <person name="Rubin G.M."/>
            <person name="Venter J.C."/>
        </authorList>
    </citation>
    <scope>NUCLEOTIDE SEQUENCE [LARGE SCALE GENOMIC DNA]</scope>
    <source>
        <strain>Berkeley</strain>
    </source>
</reference>
<reference key="3">
    <citation type="journal article" date="2002" name="Genome Biol.">
        <title>Annotation of the Drosophila melanogaster euchromatic genome: a systematic review.</title>
        <authorList>
            <person name="Misra S."/>
            <person name="Crosby M.A."/>
            <person name="Mungall C.J."/>
            <person name="Matthews B.B."/>
            <person name="Campbell K.S."/>
            <person name="Hradecky P."/>
            <person name="Huang Y."/>
            <person name="Kaminker J.S."/>
            <person name="Millburn G.H."/>
            <person name="Prochnik S.E."/>
            <person name="Smith C.D."/>
            <person name="Tupy J.L."/>
            <person name="Whitfield E.J."/>
            <person name="Bayraktaroglu L."/>
            <person name="Berman B.P."/>
            <person name="Bettencourt B.R."/>
            <person name="Celniker S.E."/>
            <person name="de Grey A.D.N.J."/>
            <person name="Drysdale R.A."/>
            <person name="Harris N.L."/>
            <person name="Richter J."/>
            <person name="Russo S."/>
            <person name="Schroeder A.J."/>
            <person name="Shu S.Q."/>
            <person name="Stapleton M."/>
            <person name="Yamada C."/>
            <person name="Ashburner M."/>
            <person name="Gelbart W.M."/>
            <person name="Rubin G.M."/>
            <person name="Lewis S.E."/>
        </authorList>
    </citation>
    <scope>GENOME REANNOTATION</scope>
    <source>
        <strain>Berkeley</strain>
    </source>
</reference>
<reference key="4">
    <citation type="journal article" date="2002" name="Genome Biol.">
        <title>A Drosophila full-length cDNA resource.</title>
        <authorList>
            <person name="Stapleton M."/>
            <person name="Carlson J.W."/>
            <person name="Brokstein P."/>
            <person name="Yu C."/>
            <person name="Champe M."/>
            <person name="George R.A."/>
            <person name="Guarin H."/>
            <person name="Kronmiller B."/>
            <person name="Pacleb J.M."/>
            <person name="Park S."/>
            <person name="Wan K.H."/>
            <person name="Rubin G.M."/>
            <person name="Celniker S.E."/>
        </authorList>
    </citation>
    <scope>NUCLEOTIDE SEQUENCE [LARGE SCALE MRNA]</scope>
    <source>
        <strain>Berkeley</strain>
        <tissue>Embryo</tissue>
    </source>
</reference>